<dbReference type="EC" id="2.5.1.61" evidence="1"/>
<dbReference type="EMBL" id="CP001111">
    <property type="protein sequence ID" value="ACF53229.1"/>
    <property type="molecule type" value="Genomic_DNA"/>
</dbReference>
<dbReference type="RefSeq" id="WP_012512180.1">
    <property type="nucleotide sequence ID" value="NC_011071.1"/>
</dbReference>
<dbReference type="SMR" id="B4SJT8"/>
<dbReference type="STRING" id="391008.Smal_3530"/>
<dbReference type="KEGG" id="smt:Smal_3530"/>
<dbReference type="eggNOG" id="COG0181">
    <property type="taxonomic scope" value="Bacteria"/>
</dbReference>
<dbReference type="HOGENOM" id="CLU_019704_1_0_6"/>
<dbReference type="OrthoDB" id="9810298at2"/>
<dbReference type="UniPathway" id="UPA00251">
    <property type="reaction ID" value="UER00319"/>
</dbReference>
<dbReference type="Proteomes" id="UP000001867">
    <property type="component" value="Chromosome"/>
</dbReference>
<dbReference type="GO" id="GO:0005737">
    <property type="term" value="C:cytoplasm"/>
    <property type="evidence" value="ECO:0007669"/>
    <property type="project" value="TreeGrafter"/>
</dbReference>
<dbReference type="GO" id="GO:0004418">
    <property type="term" value="F:hydroxymethylbilane synthase activity"/>
    <property type="evidence" value="ECO:0007669"/>
    <property type="project" value="UniProtKB-UniRule"/>
</dbReference>
<dbReference type="GO" id="GO:0006782">
    <property type="term" value="P:protoporphyrinogen IX biosynthetic process"/>
    <property type="evidence" value="ECO:0007669"/>
    <property type="project" value="UniProtKB-UniRule"/>
</dbReference>
<dbReference type="CDD" id="cd13646">
    <property type="entry name" value="PBP2_EcHMBS_like"/>
    <property type="match status" value="1"/>
</dbReference>
<dbReference type="FunFam" id="3.40.190.10:FF:000004">
    <property type="entry name" value="Porphobilinogen deaminase"/>
    <property type="match status" value="1"/>
</dbReference>
<dbReference type="FunFam" id="3.40.190.10:FF:000005">
    <property type="entry name" value="Porphobilinogen deaminase"/>
    <property type="match status" value="1"/>
</dbReference>
<dbReference type="Gene3D" id="3.40.190.10">
    <property type="entry name" value="Periplasmic binding protein-like II"/>
    <property type="match status" value="2"/>
</dbReference>
<dbReference type="Gene3D" id="3.30.160.40">
    <property type="entry name" value="Porphobilinogen deaminase, C-terminal domain"/>
    <property type="match status" value="1"/>
</dbReference>
<dbReference type="HAMAP" id="MF_00260">
    <property type="entry name" value="Porphobil_deam"/>
    <property type="match status" value="1"/>
</dbReference>
<dbReference type="InterPro" id="IPR000860">
    <property type="entry name" value="HemC"/>
</dbReference>
<dbReference type="InterPro" id="IPR022419">
    <property type="entry name" value="Porphobilin_deaminase_cofac_BS"/>
</dbReference>
<dbReference type="InterPro" id="IPR022417">
    <property type="entry name" value="Porphobilin_deaminase_N"/>
</dbReference>
<dbReference type="InterPro" id="IPR022418">
    <property type="entry name" value="Porphobilinogen_deaminase_C"/>
</dbReference>
<dbReference type="InterPro" id="IPR036803">
    <property type="entry name" value="Porphobilinogen_deaminase_C_sf"/>
</dbReference>
<dbReference type="NCBIfam" id="TIGR00212">
    <property type="entry name" value="hemC"/>
    <property type="match status" value="1"/>
</dbReference>
<dbReference type="PANTHER" id="PTHR11557">
    <property type="entry name" value="PORPHOBILINOGEN DEAMINASE"/>
    <property type="match status" value="1"/>
</dbReference>
<dbReference type="PANTHER" id="PTHR11557:SF0">
    <property type="entry name" value="PORPHOBILINOGEN DEAMINASE"/>
    <property type="match status" value="1"/>
</dbReference>
<dbReference type="Pfam" id="PF01379">
    <property type="entry name" value="Porphobil_deam"/>
    <property type="match status" value="1"/>
</dbReference>
<dbReference type="Pfam" id="PF03900">
    <property type="entry name" value="Porphobil_deamC"/>
    <property type="match status" value="1"/>
</dbReference>
<dbReference type="PIRSF" id="PIRSF001438">
    <property type="entry name" value="4pyrrol_synth_OHMeBilane_synth"/>
    <property type="match status" value="1"/>
</dbReference>
<dbReference type="PRINTS" id="PR00151">
    <property type="entry name" value="PORPHBDMNASE"/>
</dbReference>
<dbReference type="SUPFAM" id="SSF53850">
    <property type="entry name" value="Periplasmic binding protein-like II"/>
    <property type="match status" value="1"/>
</dbReference>
<dbReference type="SUPFAM" id="SSF54782">
    <property type="entry name" value="Porphobilinogen deaminase (hydroxymethylbilane synthase), C-terminal domain"/>
    <property type="match status" value="1"/>
</dbReference>
<dbReference type="PROSITE" id="PS00533">
    <property type="entry name" value="PORPHOBILINOGEN_DEAM"/>
    <property type="match status" value="1"/>
</dbReference>
<organism>
    <name type="scientific">Stenotrophomonas maltophilia (strain R551-3)</name>
    <dbReference type="NCBI Taxonomy" id="391008"/>
    <lineage>
        <taxon>Bacteria</taxon>
        <taxon>Pseudomonadati</taxon>
        <taxon>Pseudomonadota</taxon>
        <taxon>Gammaproteobacteria</taxon>
        <taxon>Lysobacterales</taxon>
        <taxon>Lysobacteraceae</taxon>
        <taxon>Stenotrophomonas</taxon>
        <taxon>Stenotrophomonas maltophilia group</taxon>
    </lineage>
</organism>
<comment type="function">
    <text evidence="1">Tetrapolymerization of the monopyrrole PBG into the hydroxymethylbilane pre-uroporphyrinogen in several discrete steps.</text>
</comment>
<comment type="catalytic activity">
    <reaction evidence="1">
        <text>4 porphobilinogen + H2O = hydroxymethylbilane + 4 NH4(+)</text>
        <dbReference type="Rhea" id="RHEA:13185"/>
        <dbReference type="ChEBI" id="CHEBI:15377"/>
        <dbReference type="ChEBI" id="CHEBI:28938"/>
        <dbReference type="ChEBI" id="CHEBI:57845"/>
        <dbReference type="ChEBI" id="CHEBI:58126"/>
        <dbReference type="EC" id="2.5.1.61"/>
    </reaction>
</comment>
<comment type="cofactor">
    <cofactor evidence="1">
        <name>dipyrromethane</name>
        <dbReference type="ChEBI" id="CHEBI:60342"/>
    </cofactor>
    <text evidence="1">Binds 1 dipyrromethane group covalently.</text>
</comment>
<comment type="pathway">
    <text evidence="1">Porphyrin-containing compound metabolism; protoporphyrin-IX biosynthesis; coproporphyrinogen-III from 5-aminolevulinate: step 2/4.</text>
</comment>
<comment type="subunit">
    <text evidence="1">Monomer.</text>
</comment>
<comment type="miscellaneous">
    <text evidence="1">The porphobilinogen subunits are added to the dipyrromethane group.</text>
</comment>
<comment type="similarity">
    <text evidence="1">Belongs to the HMBS family.</text>
</comment>
<sequence length="303" mass="32240">METVRIATRKSPLALWQSEHVADRLRQAHPGLHVELVPMSTRGDEVLDRSLAAIGGKGLFLKELELAMLRGEADCAVHSLKDVPMELDEPFALPAMLTRHDPADGFVSNLYASLDALPIGARVGTSSLRRQAQLRALRPDLQLLDLRGNVNTRLAKLDNGGYDAIVLAVAGLERLGLGERIVARLQPPQWLPAPAQGAVAVECDGSNARLMALFAGLDDAATRACVEAERAMNRALHGSCHVPVAAIAQWQGQDLHLQGLVGSASDGRAVRAEAVGPASDPEVLGQRVAKMLLDAGAGELLNV</sequence>
<reference key="1">
    <citation type="submission" date="2008-06" db="EMBL/GenBank/DDBJ databases">
        <title>Complete sequence of Stenotrophomonas maltophilia R551-3.</title>
        <authorList>
            <consortium name="US DOE Joint Genome Institute"/>
            <person name="Lucas S."/>
            <person name="Copeland A."/>
            <person name="Lapidus A."/>
            <person name="Glavina del Rio T."/>
            <person name="Dalin E."/>
            <person name="Tice H."/>
            <person name="Pitluck S."/>
            <person name="Chain P."/>
            <person name="Malfatti S."/>
            <person name="Shin M."/>
            <person name="Vergez L."/>
            <person name="Lang D."/>
            <person name="Schmutz J."/>
            <person name="Larimer F."/>
            <person name="Land M."/>
            <person name="Hauser L."/>
            <person name="Kyrpides N."/>
            <person name="Mikhailova N."/>
            <person name="Taghavi S."/>
            <person name="Monchy S."/>
            <person name="Newman L."/>
            <person name="Vangronsveld J."/>
            <person name="van der Lelie D."/>
            <person name="Richardson P."/>
        </authorList>
    </citation>
    <scope>NUCLEOTIDE SEQUENCE [LARGE SCALE GENOMIC DNA]</scope>
    <source>
        <strain>R551-3</strain>
    </source>
</reference>
<feature type="chain" id="PRO_1000114179" description="Porphobilinogen deaminase">
    <location>
        <begin position="1"/>
        <end position="303"/>
    </location>
</feature>
<feature type="modified residue" description="S-(dipyrrolylmethanemethyl)cysteine" evidence="1">
    <location>
        <position position="240"/>
    </location>
</feature>
<name>HEM3_STRM5</name>
<protein>
    <recommendedName>
        <fullName evidence="1">Porphobilinogen deaminase</fullName>
        <shortName evidence="1">PBG</shortName>
        <ecNumber evidence="1">2.5.1.61</ecNumber>
    </recommendedName>
    <alternativeName>
        <fullName evidence="1">Hydroxymethylbilane synthase</fullName>
        <shortName evidence="1">HMBS</shortName>
    </alternativeName>
    <alternativeName>
        <fullName evidence="1">Pre-uroporphyrinogen synthase</fullName>
    </alternativeName>
</protein>
<accession>B4SJT8</accession>
<proteinExistence type="inferred from homology"/>
<keyword id="KW-0627">Porphyrin biosynthesis</keyword>
<keyword id="KW-0808">Transferase</keyword>
<gene>
    <name evidence="1" type="primary">hemC</name>
    <name type="ordered locus">Smal_3530</name>
</gene>
<evidence type="ECO:0000255" key="1">
    <source>
        <dbReference type="HAMAP-Rule" id="MF_00260"/>
    </source>
</evidence>